<dbReference type="EC" id="3.1.11.6" evidence="1"/>
<dbReference type="EMBL" id="CP000142">
    <property type="protein sequence ID" value="ABA88914.1"/>
    <property type="molecule type" value="Genomic_DNA"/>
</dbReference>
<dbReference type="RefSeq" id="WP_011341404.1">
    <property type="nucleotide sequence ID" value="NC_007498.2"/>
</dbReference>
<dbReference type="SMR" id="Q3A3Z3"/>
<dbReference type="STRING" id="338963.Pcar_1670"/>
<dbReference type="KEGG" id="pca:Pcar_1670"/>
<dbReference type="eggNOG" id="COG1570">
    <property type="taxonomic scope" value="Bacteria"/>
</dbReference>
<dbReference type="HOGENOM" id="CLU_023625_3_1_7"/>
<dbReference type="OrthoDB" id="9802795at2"/>
<dbReference type="Proteomes" id="UP000002534">
    <property type="component" value="Chromosome"/>
</dbReference>
<dbReference type="GO" id="GO:0005737">
    <property type="term" value="C:cytoplasm"/>
    <property type="evidence" value="ECO:0007669"/>
    <property type="project" value="UniProtKB-SubCell"/>
</dbReference>
<dbReference type="GO" id="GO:0009318">
    <property type="term" value="C:exodeoxyribonuclease VII complex"/>
    <property type="evidence" value="ECO:0007669"/>
    <property type="project" value="InterPro"/>
</dbReference>
<dbReference type="GO" id="GO:0008855">
    <property type="term" value="F:exodeoxyribonuclease VII activity"/>
    <property type="evidence" value="ECO:0007669"/>
    <property type="project" value="UniProtKB-UniRule"/>
</dbReference>
<dbReference type="GO" id="GO:0003676">
    <property type="term" value="F:nucleic acid binding"/>
    <property type="evidence" value="ECO:0007669"/>
    <property type="project" value="InterPro"/>
</dbReference>
<dbReference type="GO" id="GO:0006308">
    <property type="term" value="P:DNA catabolic process"/>
    <property type="evidence" value="ECO:0007669"/>
    <property type="project" value="UniProtKB-UniRule"/>
</dbReference>
<dbReference type="CDD" id="cd04489">
    <property type="entry name" value="ExoVII_LU_OBF"/>
    <property type="match status" value="1"/>
</dbReference>
<dbReference type="HAMAP" id="MF_00378">
    <property type="entry name" value="Exonuc_7_L"/>
    <property type="match status" value="1"/>
</dbReference>
<dbReference type="InterPro" id="IPR003753">
    <property type="entry name" value="Exonuc_VII_L"/>
</dbReference>
<dbReference type="InterPro" id="IPR020579">
    <property type="entry name" value="Exonuc_VII_lsu_C"/>
</dbReference>
<dbReference type="InterPro" id="IPR025824">
    <property type="entry name" value="OB-fold_nuc-bd_dom"/>
</dbReference>
<dbReference type="NCBIfam" id="TIGR00237">
    <property type="entry name" value="xseA"/>
    <property type="match status" value="1"/>
</dbReference>
<dbReference type="PANTHER" id="PTHR30008">
    <property type="entry name" value="EXODEOXYRIBONUCLEASE 7 LARGE SUBUNIT"/>
    <property type="match status" value="1"/>
</dbReference>
<dbReference type="PANTHER" id="PTHR30008:SF0">
    <property type="entry name" value="EXODEOXYRIBONUCLEASE 7 LARGE SUBUNIT"/>
    <property type="match status" value="1"/>
</dbReference>
<dbReference type="Pfam" id="PF02601">
    <property type="entry name" value="Exonuc_VII_L"/>
    <property type="match status" value="2"/>
</dbReference>
<dbReference type="Pfam" id="PF13742">
    <property type="entry name" value="tRNA_anti_2"/>
    <property type="match status" value="1"/>
</dbReference>
<proteinExistence type="inferred from homology"/>
<reference key="1">
    <citation type="submission" date="2005-10" db="EMBL/GenBank/DDBJ databases">
        <title>Complete sequence of Pelobacter carbinolicus DSM 2380.</title>
        <authorList>
            <person name="Copeland A."/>
            <person name="Lucas S."/>
            <person name="Lapidus A."/>
            <person name="Barry K."/>
            <person name="Detter J.C."/>
            <person name="Glavina T."/>
            <person name="Hammon N."/>
            <person name="Israni S."/>
            <person name="Pitluck S."/>
            <person name="Chertkov O."/>
            <person name="Schmutz J."/>
            <person name="Larimer F."/>
            <person name="Land M."/>
            <person name="Kyrpides N."/>
            <person name="Ivanova N."/>
            <person name="Richardson P."/>
        </authorList>
    </citation>
    <scope>NUCLEOTIDE SEQUENCE [LARGE SCALE GENOMIC DNA]</scope>
    <source>
        <strain>DSM 2380 / NBRC 103641 / GraBd1</strain>
    </source>
</reference>
<gene>
    <name evidence="1" type="primary">xseA</name>
    <name type="ordered locus">Pcar_1670</name>
</gene>
<keyword id="KW-0963">Cytoplasm</keyword>
<keyword id="KW-0269">Exonuclease</keyword>
<keyword id="KW-0378">Hydrolase</keyword>
<keyword id="KW-0540">Nuclease</keyword>
<keyword id="KW-1185">Reference proteome</keyword>
<comment type="function">
    <text evidence="1">Bidirectionally degrades single-stranded DNA into large acid-insoluble oligonucleotides, which are then degraded further into small acid-soluble oligonucleotides.</text>
</comment>
<comment type="catalytic activity">
    <reaction evidence="1">
        <text>Exonucleolytic cleavage in either 5'- to 3'- or 3'- to 5'-direction to yield nucleoside 5'-phosphates.</text>
        <dbReference type="EC" id="3.1.11.6"/>
    </reaction>
</comment>
<comment type="subunit">
    <text evidence="1">Heterooligomer composed of large and small subunits.</text>
</comment>
<comment type="subcellular location">
    <subcellularLocation>
        <location evidence="1">Cytoplasm</location>
    </subcellularLocation>
</comment>
<comment type="similarity">
    <text evidence="1">Belongs to the XseA family.</text>
</comment>
<accession>Q3A3Z3</accession>
<name>EX7L_SYNC1</name>
<evidence type="ECO:0000255" key="1">
    <source>
        <dbReference type="HAMAP-Rule" id="MF_00378"/>
    </source>
</evidence>
<sequence>MNISEGTVSVSRLVYLLKEVVEDNFVQVLVTGEIANFSAPSSGHYYFAVKDDQAQLRGVMFRSSNRLLKFTPENGMQVLCGGRVSLYPQRGELQLVVDRMEPLGVGSWQLAFEKLKTKLDAEGLFEVGRKRRLPSFPRTIGVVTSPTGAAIHDILNVLRRRGAGLHVLLSPVRVQGDGAADEIARAIADFNRHGQADVLIVGRGGGSPEDLWAFNEEVVARAVFASRIPVISAVGHEVDVTISDLVADLRAPTPSAAAELVVQGRQELERHVDHLVMRLSGQMQGRLSLLKERLDGLRRRLRSPVDDLRRQYRDLEQLRKRLFSAMEKTMQRAANRLGLAGSRLHALSPLATLDRGYAIVFSAKTSTIVRDARTLTPGDRVQIRFAKGSVEATVDEVDHGD</sequence>
<feature type="chain" id="PRO_0000303808" description="Exodeoxyribonuclease 7 large subunit">
    <location>
        <begin position="1"/>
        <end position="401"/>
    </location>
</feature>
<protein>
    <recommendedName>
        <fullName evidence="1">Exodeoxyribonuclease 7 large subunit</fullName>
        <ecNumber evidence="1">3.1.11.6</ecNumber>
    </recommendedName>
    <alternativeName>
        <fullName evidence="1">Exodeoxyribonuclease VII large subunit</fullName>
        <shortName evidence="1">Exonuclease VII large subunit</shortName>
    </alternativeName>
</protein>
<organism>
    <name type="scientific">Syntrophotalea carbinolica (strain DSM 2380 / NBRC 103641 / GraBd1)</name>
    <name type="common">Pelobacter carbinolicus</name>
    <dbReference type="NCBI Taxonomy" id="338963"/>
    <lineage>
        <taxon>Bacteria</taxon>
        <taxon>Pseudomonadati</taxon>
        <taxon>Thermodesulfobacteriota</taxon>
        <taxon>Desulfuromonadia</taxon>
        <taxon>Desulfuromonadales</taxon>
        <taxon>Syntrophotaleaceae</taxon>
        <taxon>Syntrophotalea</taxon>
    </lineage>
</organism>